<reference key="1">
    <citation type="journal article" date="1987" name="Biochemistry">
        <title>Ovomucoid third domains from 100 avian species: isolation, sequences, and hypervariability of enzyme-inhibitor contact residues.</title>
        <authorList>
            <person name="Laskowski M. Jr."/>
            <person name="Kato I."/>
            <person name="Ardelt W."/>
            <person name="Cook J."/>
            <person name="Denton A."/>
            <person name="Empie M.W."/>
            <person name="Kohr W.J."/>
            <person name="Park S.J."/>
            <person name="Parks K."/>
            <person name="Schatzley B.L."/>
            <person name="Schoenberger O.L."/>
            <person name="Tashiro M."/>
            <person name="Vichot G."/>
            <person name="Whatley H.E."/>
            <person name="Wieczorek A."/>
            <person name="Wieczorek M."/>
        </authorList>
    </citation>
    <scope>PROTEIN SEQUENCE</scope>
</reference>
<feature type="chain" id="PRO_0000073145" description="Ovomucoid">
    <location>
        <begin position="1" status="less than"/>
        <end position="54" status="greater than"/>
    </location>
</feature>
<feature type="domain" description="Kazal-like" evidence="1">
    <location>
        <begin position="4"/>
        <end position="54"/>
    </location>
</feature>
<feature type="site" description="Reactive bond 3">
    <location>
        <begin position="16"/>
        <end position="17"/>
    </location>
</feature>
<feature type="glycosylation site" description="N-linked (GlcNAc...) asparagine">
    <location>
        <position position="43"/>
    </location>
</feature>
<feature type="disulfide bond">
    <location>
        <begin position="6"/>
        <end position="36"/>
    </location>
</feature>
<feature type="disulfide bond">
    <location>
        <begin position="14"/>
        <end position="33"/>
    </location>
</feature>
<feature type="disulfide bond">
    <location>
        <begin position="22"/>
        <end position="54"/>
    </location>
</feature>
<feature type="non-terminal residue">
    <location>
        <position position="1"/>
    </location>
</feature>
<feature type="non-terminal residue">
    <location>
        <position position="54"/>
    </location>
</feature>
<keyword id="KW-0903">Direct protein sequencing</keyword>
<keyword id="KW-1015">Disulfide bond</keyword>
<keyword id="KW-0325">Glycoprotein</keyword>
<keyword id="KW-0646">Protease inhibitor</keyword>
<keyword id="KW-0677">Repeat</keyword>
<keyword id="KW-0964">Secreted</keyword>
<keyword id="KW-0722">Serine protease inhibitor</keyword>
<sequence>VATVDCSGYPKPACTMEYMPLCGSDNKTYGNKCNFCNAVVDSNGTLTLSHFGEC</sequence>
<dbReference type="PIR" id="A31444">
    <property type="entry name" value="A31444"/>
</dbReference>
<dbReference type="SMR" id="P68155"/>
<dbReference type="GO" id="GO:0005576">
    <property type="term" value="C:extracellular region"/>
    <property type="evidence" value="ECO:0007669"/>
    <property type="project" value="UniProtKB-SubCell"/>
</dbReference>
<dbReference type="GO" id="GO:0004867">
    <property type="term" value="F:serine-type endopeptidase inhibitor activity"/>
    <property type="evidence" value="ECO:0007669"/>
    <property type="project" value="UniProtKB-KW"/>
</dbReference>
<dbReference type="CDD" id="cd00104">
    <property type="entry name" value="KAZAL_FS"/>
    <property type="match status" value="1"/>
</dbReference>
<dbReference type="FunFam" id="3.30.60.30:FF:000037">
    <property type="entry name" value="Ovomucoid"/>
    <property type="match status" value="1"/>
</dbReference>
<dbReference type="Gene3D" id="3.30.60.30">
    <property type="match status" value="1"/>
</dbReference>
<dbReference type="InterPro" id="IPR051597">
    <property type="entry name" value="Bifunctional_prot_inhibitor"/>
</dbReference>
<dbReference type="InterPro" id="IPR002350">
    <property type="entry name" value="Kazal_dom"/>
</dbReference>
<dbReference type="InterPro" id="IPR036058">
    <property type="entry name" value="Kazal_dom_sf"/>
</dbReference>
<dbReference type="InterPro" id="IPR001239">
    <property type="entry name" value="Prot_inh_Kazal-m"/>
</dbReference>
<dbReference type="PANTHER" id="PTHR47729:SF1">
    <property type="entry name" value="OVOMUCOID-LIKE-RELATED"/>
    <property type="match status" value="1"/>
</dbReference>
<dbReference type="PANTHER" id="PTHR47729">
    <property type="entry name" value="SERINE PEPTIDASE INHIBITOR, KAZAL TYPE 2, TANDEM DUPLICATE 1-RELATED"/>
    <property type="match status" value="1"/>
</dbReference>
<dbReference type="Pfam" id="PF00050">
    <property type="entry name" value="Kazal_1"/>
    <property type="match status" value="1"/>
</dbReference>
<dbReference type="PRINTS" id="PR00290">
    <property type="entry name" value="KAZALINHBTR"/>
</dbReference>
<dbReference type="SMART" id="SM00280">
    <property type="entry name" value="KAZAL"/>
    <property type="match status" value="1"/>
</dbReference>
<dbReference type="SUPFAM" id="SSF100895">
    <property type="entry name" value="Kazal-type serine protease inhibitors"/>
    <property type="match status" value="1"/>
</dbReference>
<dbReference type="PROSITE" id="PS00282">
    <property type="entry name" value="KAZAL_1"/>
    <property type="match status" value="1"/>
</dbReference>
<dbReference type="PROSITE" id="PS51465">
    <property type="entry name" value="KAZAL_2"/>
    <property type="match status" value="1"/>
</dbReference>
<accession>P68155</accession>
<accession>P05576</accession>
<evidence type="ECO:0000255" key="1">
    <source>
        <dbReference type="PROSITE-ProRule" id="PRU00798"/>
    </source>
</evidence>
<organism>
    <name type="scientific">Neochen jubata</name>
    <name type="common">Orinoco goose</name>
    <name type="synonym">Anser jubatus</name>
    <dbReference type="NCBI Taxonomy" id="8882"/>
    <lineage>
        <taxon>Eukaryota</taxon>
        <taxon>Metazoa</taxon>
        <taxon>Chordata</taxon>
        <taxon>Craniata</taxon>
        <taxon>Vertebrata</taxon>
        <taxon>Euteleostomi</taxon>
        <taxon>Archelosauria</taxon>
        <taxon>Archosauria</taxon>
        <taxon>Dinosauria</taxon>
        <taxon>Saurischia</taxon>
        <taxon>Theropoda</taxon>
        <taxon>Coelurosauria</taxon>
        <taxon>Aves</taxon>
        <taxon>Neognathae</taxon>
        <taxon>Galloanserae</taxon>
        <taxon>Anseriformes</taxon>
        <taxon>Anatidae</taxon>
        <taxon>Tadorninae</taxon>
        <taxon>Neochen</taxon>
    </lineage>
</organism>
<protein>
    <recommendedName>
        <fullName>Ovomucoid</fullName>
    </recommendedName>
</protein>
<proteinExistence type="evidence at protein level"/>
<name>IOVO_NEOJU</name>
<comment type="subcellular location">
    <subcellularLocation>
        <location>Secreted</location>
    </subcellularLocation>
</comment>
<comment type="domain">
    <text>Avian ovomucoid consists of three homologous, tandem Kazal family inhibitory domains.</text>
</comment>